<proteinExistence type="inferred from homology"/>
<name>YQGF_YERPA</name>
<sequence>MANRTIIAFDFGTKSIGVAIGQEVTGTARALTAFKAQDGTPDWQQVEKLLKEWQPNLVVVGLPLNMDGTEQPLTARARRFANRLHGRFGVQVALQDERLSTVEARANLFDRGGYRALDKGSVDAASAVIILESWFDEQAG</sequence>
<organism>
    <name type="scientific">Yersinia pestis bv. Antiqua (strain Antiqua)</name>
    <dbReference type="NCBI Taxonomy" id="360102"/>
    <lineage>
        <taxon>Bacteria</taxon>
        <taxon>Pseudomonadati</taxon>
        <taxon>Pseudomonadota</taxon>
        <taxon>Gammaproteobacteria</taxon>
        <taxon>Enterobacterales</taxon>
        <taxon>Yersiniaceae</taxon>
        <taxon>Yersinia</taxon>
    </lineage>
</organism>
<comment type="function">
    <text evidence="1">Could be a nuclease involved in processing of the 5'-end of pre-16S rRNA.</text>
</comment>
<comment type="subcellular location">
    <subcellularLocation>
        <location evidence="1">Cytoplasm</location>
    </subcellularLocation>
</comment>
<comment type="similarity">
    <text evidence="1">Belongs to the YqgF nuclease family.</text>
</comment>
<protein>
    <recommendedName>
        <fullName evidence="1">Putative pre-16S rRNA nuclease</fullName>
        <ecNumber evidence="1">3.1.-.-</ecNumber>
    </recommendedName>
</protein>
<evidence type="ECO:0000255" key="1">
    <source>
        <dbReference type="HAMAP-Rule" id="MF_00651"/>
    </source>
</evidence>
<gene>
    <name evidence="1" type="primary">yqgF</name>
    <name type="ordered locus">YPA_0328</name>
</gene>
<accession>Q1CB76</accession>
<keyword id="KW-0963">Cytoplasm</keyword>
<keyword id="KW-0378">Hydrolase</keyword>
<keyword id="KW-0540">Nuclease</keyword>
<keyword id="KW-0690">Ribosome biogenesis</keyword>
<feature type="chain" id="PRO_0000257619" description="Putative pre-16S rRNA nuclease">
    <location>
        <begin position="1"/>
        <end position="140"/>
    </location>
</feature>
<reference key="1">
    <citation type="journal article" date="2006" name="J. Bacteriol.">
        <title>Complete genome sequence of Yersinia pestis strains Antiqua and Nepal516: evidence of gene reduction in an emerging pathogen.</title>
        <authorList>
            <person name="Chain P.S.G."/>
            <person name="Hu P."/>
            <person name="Malfatti S.A."/>
            <person name="Radnedge L."/>
            <person name="Larimer F."/>
            <person name="Vergez L.M."/>
            <person name="Worsham P."/>
            <person name="Chu M.C."/>
            <person name="Andersen G.L."/>
        </authorList>
    </citation>
    <scope>NUCLEOTIDE SEQUENCE [LARGE SCALE GENOMIC DNA]</scope>
    <source>
        <strain>Antiqua</strain>
    </source>
</reference>
<dbReference type="EC" id="3.1.-.-" evidence="1"/>
<dbReference type="EMBL" id="CP000308">
    <property type="protein sequence ID" value="ABG12296.1"/>
    <property type="molecule type" value="Genomic_DNA"/>
</dbReference>
<dbReference type="SMR" id="Q1CB76"/>
<dbReference type="KEGG" id="ypa:YPA_0328"/>
<dbReference type="Proteomes" id="UP000001971">
    <property type="component" value="Chromosome"/>
</dbReference>
<dbReference type="GO" id="GO:0005829">
    <property type="term" value="C:cytosol"/>
    <property type="evidence" value="ECO:0007669"/>
    <property type="project" value="TreeGrafter"/>
</dbReference>
<dbReference type="GO" id="GO:0004518">
    <property type="term" value="F:nuclease activity"/>
    <property type="evidence" value="ECO:0007669"/>
    <property type="project" value="UniProtKB-KW"/>
</dbReference>
<dbReference type="GO" id="GO:0000967">
    <property type="term" value="P:rRNA 5'-end processing"/>
    <property type="evidence" value="ECO:0007669"/>
    <property type="project" value="UniProtKB-UniRule"/>
</dbReference>
<dbReference type="CDD" id="cd16964">
    <property type="entry name" value="YqgF"/>
    <property type="match status" value="1"/>
</dbReference>
<dbReference type="FunFam" id="3.30.420.140:FF:000002">
    <property type="entry name" value="Putative pre-16S rRNA nuclease"/>
    <property type="match status" value="1"/>
</dbReference>
<dbReference type="Gene3D" id="3.30.420.140">
    <property type="entry name" value="YqgF/RNase H-like domain"/>
    <property type="match status" value="1"/>
</dbReference>
<dbReference type="HAMAP" id="MF_00651">
    <property type="entry name" value="Nuclease_YqgF"/>
    <property type="match status" value="1"/>
</dbReference>
<dbReference type="InterPro" id="IPR012337">
    <property type="entry name" value="RNaseH-like_sf"/>
</dbReference>
<dbReference type="InterPro" id="IPR005227">
    <property type="entry name" value="YqgF"/>
</dbReference>
<dbReference type="InterPro" id="IPR006641">
    <property type="entry name" value="YqgF/RNaseH-like_dom"/>
</dbReference>
<dbReference type="InterPro" id="IPR037027">
    <property type="entry name" value="YqgF/RNaseH-like_dom_sf"/>
</dbReference>
<dbReference type="NCBIfam" id="TIGR00250">
    <property type="entry name" value="RNAse_H_YqgF"/>
    <property type="match status" value="1"/>
</dbReference>
<dbReference type="PANTHER" id="PTHR33317">
    <property type="entry name" value="POLYNUCLEOTIDYL TRANSFERASE, RIBONUCLEASE H-LIKE SUPERFAMILY PROTEIN"/>
    <property type="match status" value="1"/>
</dbReference>
<dbReference type="PANTHER" id="PTHR33317:SF4">
    <property type="entry name" value="POLYNUCLEOTIDYL TRANSFERASE, RIBONUCLEASE H-LIKE SUPERFAMILY PROTEIN"/>
    <property type="match status" value="1"/>
</dbReference>
<dbReference type="Pfam" id="PF03652">
    <property type="entry name" value="RuvX"/>
    <property type="match status" value="1"/>
</dbReference>
<dbReference type="SMART" id="SM00732">
    <property type="entry name" value="YqgFc"/>
    <property type="match status" value="1"/>
</dbReference>
<dbReference type="SUPFAM" id="SSF53098">
    <property type="entry name" value="Ribonuclease H-like"/>
    <property type="match status" value="1"/>
</dbReference>